<proteinExistence type="inferred from homology"/>
<evidence type="ECO:0000255" key="1">
    <source>
        <dbReference type="HAMAP-Rule" id="MF_00142"/>
    </source>
</evidence>
<accession>A9IHP8</accession>
<sequence>MTETEFLALVDQVLDSIESQADDWAASQDVDIETSRSGNVLTLVFEDGTHVVVNSQAAMQEIWVAARSGGFHYRYDGQHWNDTRGGPRLPDALSQICSEAAGVPVAVRL</sequence>
<organism>
    <name type="scientific">Bordetella petrii (strain ATCC BAA-461 / DSM 12804 / CCUG 43448)</name>
    <dbReference type="NCBI Taxonomy" id="340100"/>
    <lineage>
        <taxon>Bacteria</taxon>
        <taxon>Pseudomonadati</taxon>
        <taxon>Pseudomonadota</taxon>
        <taxon>Betaproteobacteria</taxon>
        <taxon>Burkholderiales</taxon>
        <taxon>Alcaligenaceae</taxon>
        <taxon>Bordetella</taxon>
    </lineage>
</organism>
<protein>
    <recommendedName>
        <fullName evidence="1">Iron-sulfur cluster assembly protein CyaY</fullName>
    </recommendedName>
</protein>
<comment type="function">
    <text evidence="1">Involved in iron-sulfur (Fe-S) cluster assembly. May act as a regulator of Fe-S biogenesis.</text>
</comment>
<comment type="similarity">
    <text evidence="1">Belongs to the frataxin family.</text>
</comment>
<feature type="chain" id="PRO_1000096234" description="Iron-sulfur cluster assembly protein CyaY">
    <location>
        <begin position="1"/>
        <end position="109"/>
    </location>
</feature>
<reference key="1">
    <citation type="journal article" date="2008" name="BMC Genomics">
        <title>The missing link: Bordetella petrii is endowed with both the metabolic versatility of environmental bacteria and virulence traits of pathogenic Bordetellae.</title>
        <authorList>
            <person name="Gross R."/>
            <person name="Guzman C.A."/>
            <person name="Sebaihia M."/>
            <person name="Martin dos Santos V.A.P."/>
            <person name="Pieper D.H."/>
            <person name="Koebnik R."/>
            <person name="Lechner M."/>
            <person name="Bartels D."/>
            <person name="Buhrmester J."/>
            <person name="Choudhuri J.V."/>
            <person name="Ebensen T."/>
            <person name="Gaigalat L."/>
            <person name="Herrmann S."/>
            <person name="Khachane A.N."/>
            <person name="Larisch C."/>
            <person name="Link S."/>
            <person name="Linke B."/>
            <person name="Meyer F."/>
            <person name="Mormann S."/>
            <person name="Nakunst D."/>
            <person name="Rueckert C."/>
            <person name="Schneiker-Bekel S."/>
            <person name="Schulze K."/>
            <person name="Voerholter F.-J."/>
            <person name="Yevsa T."/>
            <person name="Engle J.T."/>
            <person name="Goldman W.E."/>
            <person name="Puehler A."/>
            <person name="Goebel U.B."/>
            <person name="Goesmann A."/>
            <person name="Bloecker H."/>
            <person name="Kaiser O."/>
            <person name="Martinez-Arias R."/>
        </authorList>
    </citation>
    <scope>NUCLEOTIDE SEQUENCE [LARGE SCALE GENOMIC DNA]</scope>
    <source>
        <strain>ATCC BAA-461 / DSM 12804 / CCUG 43448</strain>
    </source>
</reference>
<dbReference type="EMBL" id="AM902716">
    <property type="protein sequence ID" value="CAP45265.1"/>
    <property type="molecule type" value="Genomic_DNA"/>
</dbReference>
<dbReference type="SMR" id="A9IHP8"/>
<dbReference type="STRING" id="94624.Bpet4913"/>
<dbReference type="KEGG" id="bpt:Bpet4913"/>
<dbReference type="eggNOG" id="COG1965">
    <property type="taxonomic scope" value="Bacteria"/>
</dbReference>
<dbReference type="Proteomes" id="UP000001225">
    <property type="component" value="Chromosome"/>
</dbReference>
<dbReference type="GO" id="GO:0005829">
    <property type="term" value="C:cytosol"/>
    <property type="evidence" value="ECO:0007669"/>
    <property type="project" value="TreeGrafter"/>
</dbReference>
<dbReference type="GO" id="GO:0008199">
    <property type="term" value="F:ferric iron binding"/>
    <property type="evidence" value="ECO:0007669"/>
    <property type="project" value="InterPro"/>
</dbReference>
<dbReference type="GO" id="GO:0008198">
    <property type="term" value="F:ferrous iron binding"/>
    <property type="evidence" value="ECO:0007669"/>
    <property type="project" value="TreeGrafter"/>
</dbReference>
<dbReference type="GO" id="GO:0016226">
    <property type="term" value="P:iron-sulfur cluster assembly"/>
    <property type="evidence" value="ECO:0007669"/>
    <property type="project" value="UniProtKB-UniRule"/>
</dbReference>
<dbReference type="Gene3D" id="3.30.920.10">
    <property type="entry name" value="Frataxin/CyaY"/>
    <property type="match status" value="1"/>
</dbReference>
<dbReference type="HAMAP" id="MF_00142">
    <property type="entry name" value="CyaY"/>
    <property type="match status" value="1"/>
</dbReference>
<dbReference type="InterPro" id="IPR047584">
    <property type="entry name" value="CyaY"/>
</dbReference>
<dbReference type="InterPro" id="IPR002908">
    <property type="entry name" value="Frataxin/CyaY"/>
</dbReference>
<dbReference type="InterPro" id="IPR036524">
    <property type="entry name" value="Frataxin/CyaY_sf"/>
</dbReference>
<dbReference type="InterPro" id="IPR020895">
    <property type="entry name" value="Frataxin_CS"/>
</dbReference>
<dbReference type="NCBIfam" id="TIGR03421">
    <property type="entry name" value="FeS_CyaY"/>
    <property type="match status" value="1"/>
</dbReference>
<dbReference type="PANTHER" id="PTHR16821">
    <property type="entry name" value="FRATAXIN"/>
    <property type="match status" value="1"/>
</dbReference>
<dbReference type="PANTHER" id="PTHR16821:SF2">
    <property type="entry name" value="FRATAXIN, MITOCHONDRIAL"/>
    <property type="match status" value="1"/>
</dbReference>
<dbReference type="Pfam" id="PF01491">
    <property type="entry name" value="Frataxin_Cyay"/>
    <property type="match status" value="1"/>
</dbReference>
<dbReference type="SMART" id="SM01219">
    <property type="entry name" value="Frataxin_Cyay"/>
    <property type="match status" value="1"/>
</dbReference>
<dbReference type="SUPFAM" id="SSF55387">
    <property type="entry name" value="Frataxin/Nqo15-like"/>
    <property type="match status" value="1"/>
</dbReference>
<dbReference type="PROSITE" id="PS01344">
    <property type="entry name" value="FRATAXIN_1"/>
    <property type="match status" value="1"/>
</dbReference>
<dbReference type="PROSITE" id="PS50810">
    <property type="entry name" value="FRATAXIN_2"/>
    <property type="match status" value="1"/>
</dbReference>
<name>CYAY_BORPD</name>
<keyword id="KW-0408">Iron</keyword>
<keyword id="KW-0479">Metal-binding</keyword>
<gene>
    <name evidence="1" type="primary">cyaY</name>
    <name type="ordered locus">Bpet4913</name>
</gene>